<dbReference type="PDB" id="2G81">
    <property type="method" value="X-ray"/>
    <property type="resolution" value="1.55 A"/>
    <property type="chains" value="I=1-77"/>
</dbReference>
<dbReference type="PDB" id="3RU4">
    <property type="method" value="X-ray"/>
    <property type="resolution" value="1.68 A"/>
    <property type="chains" value="B=14-74"/>
</dbReference>
<dbReference type="PDB" id="6EAU">
    <property type="method" value="X-ray"/>
    <property type="resolution" value="1.18 A"/>
    <property type="chains" value="I=24-32"/>
</dbReference>
<dbReference type="PDB" id="6EAW">
    <property type="method" value="X-ray"/>
    <property type="resolution" value="1.29 A"/>
    <property type="chains" value="I=24-28"/>
</dbReference>
<dbReference type="PDB" id="6EAX">
    <property type="method" value="X-ray"/>
    <property type="resolution" value="1.19 A"/>
    <property type="chains" value="I=24-28"/>
</dbReference>
<dbReference type="PDBsum" id="2G81"/>
<dbReference type="PDBsum" id="3RU4"/>
<dbReference type="PDBsum" id="6EAU"/>
<dbReference type="PDBsum" id="6EAW"/>
<dbReference type="PDBsum" id="6EAX"/>
<dbReference type="SMR" id="P17734"/>
<dbReference type="MEROPS" id="I12.001"/>
<dbReference type="EvolutionaryTrace" id="P17734"/>
<dbReference type="GO" id="GO:0005576">
    <property type="term" value="C:extracellular region"/>
    <property type="evidence" value="ECO:0007669"/>
    <property type="project" value="InterPro"/>
</dbReference>
<dbReference type="GO" id="GO:0004867">
    <property type="term" value="F:serine-type endopeptidase inhibitor activity"/>
    <property type="evidence" value="ECO:0007669"/>
    <property type="project" value="UniProtKB-KW"/>
</dbReference>
<dbReference type="CDD" id="cd00023">
    <property type="entry name" value="BBI"/>
    <property type="match status" value="1"/>
</dbReference>
<dbReference type="FunFam" id="2.10.69.10:FF:000001">
    <property type="entry name" value="Bowman-Birk type proteinase inhibitor"/>
    <property type="match status" value="1"/>
</dbReference>
<dbReference type="Gene3D" id="2.10.69.10">
    <property type="entry name" value="Cysteine Protease (Bromelain) Inhibitor, subunit H"/>
    <property type="match status" value="1"/>
</dbReference>
<dbReference type="InterPro" id="IPR035995">
    <property type="entry name" value="Bowman-Birk_prot_inh"/>
</dbReference>
<dbReference type="InterPro" id="IPR000877">
    <property type="entry name" value="Prot_inh_BBI"/>
</dbReference>
<dbReference type="SMART" id="SM00269">
    <property type="entry name" value="BowB"/>
    <property type="match status" value="1"/>
</dbReference>
<dbReference type="SUPFAM" id="SSF57247">
    <property type="entry name" value="Bowman-Birk inhibitor, BBI"/>
    <property type="match status" value="1"/>
</dbReference>
<dbReference type="PROSITE" id="PS00281">
    <property type="entry name" value="BOWMAN_BIRK"/>
    <property type="match status" value="1"/>
</dbReference>
<name>IBB_VIGUN</name>
<protein>
    <recommendedName>
        <fullName>Bowman-Birk type seed trypsin and chymotrypsin inhibitor</fullName>
        <shortName>BTCI</shortName>
    </recommendedName>
</protein>
<keyword id="KW-0002">3D-structure</keyword>
<keyword id="KW-0903">Direct protein sequencing</keyword>
<keyword id="KW-1015">Disulfide bond</keyword>
<keyword id="KW-0646">Protease inhibitor</keyword>
<keyword id="KW-0722">Serine protease inhibitor</keyword>
<accession>P17734</accession>
<reference key="1">
    <citation type="journal article" date="1987" name="An. Acad. Bras. Cienc.">
        <title>The complete amino acid sequence of the Vigna unguiculata (L.) Walp. seed trypsin and chymotrypsin inhibitor.</title>
        <authorList>
            <person name="Morhy L."/>
            <person name="Ventura M.M."/>
        </authorList>
    </citation>
    <scope>PROTEIN SEQUENCE</scope>
    <source>
        <strain>cv. Serido</strain>
    </source>
</reference>
<reference key="2">
    <citation type="journal article" date="2007" name="Biophys. J.">
        <title>Crystal structure of the Bowman-Birk Inhibitor from Vigna unguiculata seeds in complex with beta-trypsin at 1.55 A resolution and its structural properties in association with proteinases.</title>
        <authorList>
            <person name="Barbosa J.A."/>
            <person name="Silva L.P."/>
            <person name="Teles R.C."/>
            <person name="Esteves G.F."/>
            <person name="Azevedo R.B."/>
            <person name="Ventura M.M."/>
            <person name="de Freitas S.M."/>
        </authorList>
    </citation>
    <scope>X-RAY CRYSTALLOGRAPHY (1.55 ANGSTROMS) OF 1-77</scope>
    <scope>DISULFIDE BONDS</scope>
</reference>
<sequence>SGHHZBSTBZASZSSKPCCRZCACTKSIPPZCRCSZVRLNSCHSACKSCACTFSIPAZCFCGBIBBFCYKPCKSSHSBBBBWN</sequence>
<proteinExistence type="evidence at protein level"/>
<evidence type="ECO:0000250" key="1"/>
<evidence type="ECO:0000269" key="2">
    <source>
    </source>
</evidence>
<evidence type="ECO:0000305" key="3"/>
<evidence type="ECO:0007829" key="4">
    <source>
        <dbReference type="PDB" id="3RU4"/>
    </source>
</evidence>
<evidence type="ECO:0007829" key="5">
    <source>
        <dbReference type="PDB" id="6EAU"/>
    </source>
</evidence>
<feature type="chain" id="PRO_0000105856" description="Bowman-Birk type seed trypsin and chymotrypsin inhibitor">
    <location>
        <begin position="1"/>
        <end position="83"/>
    </location>
</feature>
<feature type="site" description="Reactive bond for trypsin" evidence="1">
    <location>
        <begin position="26"/>
        <end position="27"/>
    </location>
</feature>
<feature type="site" description="Reactive bond for chymotrypsin" evidence="1">
    <location>
        <begin position="53"/>
        <end position="54"/>
    </location>
</feature>
<feature type="disulfide bond" evidence="2">
    <location>
        <begin position="18"/>
        <end position="72"/>
    </location>
</feature>
<feature type="disulfide bond" evidence="2">
    <location>
        <begin position="19"/>
        <end position="34"/>
    </location>
</feature>
<feature type="disulfide bond" evidence="2">
    <location>
        <begin position="22"/>
        <end position="68"/>
    </location>
</feature>
<feature type="disulfide bond" evidence="2">
    <location>
        <begin position="24"/>
        <end position="32"/>
    </location>
</feature>
<feature type="disulfide bond" evidence="2">
    <location>
        <begin position="42"/>
        <end position="49"/>
    </location>
</feature>
<feature type="disulfide bond" evidence="2">
    <location>
        <begin position="46"/>
        <end position="61"/>
    </location>
</feature>
<feature type="disulfide bond" evidence="2">
    <location>
        <begin position="51"/>
        <end position="59"/>
    </location>
</feature>
<feature type="strand" evidence="4">
    <location>
        <begin position="16"/>
        <end position="18"/>
    </location>
</feature>
<feature type="strand" evidence="5">
    <location>
        <begin position="25"/>
        <end position="29"/>
    </location>
</feature>
<feature type="strand" evidence="4">
    <location>
        <begin position="32"/>
        <end position="34"/>
    </location>
</feature>
<feature type="strand" evidence="4">
    <location>
        <begin position="37"/>
        <end position="41"/>
    </location>
</feature>
<feature type="strand" evidence="4">
    <location>
        <begin position="47"/>
        <end position="56"/>
    </location>
</feature>
<feature type="strand" evidence="4">
    <location>
        <begin position="58"/>
        <end position="61"/>
    </location>
</feature>
<feature type="strand" evidence="4">
    <location>
        <begin position="64"/>
        <end position="67"/>
    </location>
</feature>
<comment type="similarity">
    <text evidence="3">Belongs to the Bowman-Birk serine protease inhibitor family.</text>
</comment>
<organism>
    <name type="scientific">Vigna unguiculata</name>
    <name type="common">Cowpea</name>
    <dbReference type="NCBI Taxonomy" id="3917"/>
    <lineage>
        <taxon>Eukaryota</taxon>
        <taxon>Viridiplantae</taxon>
        <taxon>Streptophyta</taxon>
        <taxon>Embryophyta</taxon>
        <taxon>Tracheophyta</taxon>
        <taxon>Spermatophyta</taxon>
        <taxon>Magnoliopsida</taxon>
        <taxon>eudicotyledons</taxon>
        <taxon>Gunneridae</taxon>
        <taxon>Pentapetalae</taxon>
        <taxon>rosids</taxon>
        <taxon>fabids</taxon>
        <taxon>Fabales</taxon>
        <taxon>Fabaceae</taxon>
        <taxon>Papilionoideae</taxon>
        <taxon>50 kb inversion clade</taxon>
        <taxon>NPAAA clade</taxon>
        <taxon>indigoferoid/millettioid clade</taxon>
        <taxon>Phaseoleae</taxon>
        <taxon>Vigna</taxon>
    </lineage>
</organism>